<proteinExistence type="evidence at protein level"/>
<keyword id="KW-0878">Amphibian defense peptide</keyword>
<keyword id="KW-0044">Antibiotic</keyword>
<keyword id="KW-0929">Antimicrobial</keyword>
<keyword id="KW-0903">Direct protein sequencing</keyword>
<keyword id="KW-0964">Secreted</keyword>
<reference key="1">
    <citation type="journal article" date="2004" name="Biochem. Biophys. Res. Commun.">
        <title>The ascaphins: a family of antimicrobial peptides from the skin secretions of the most primitive extant frog, Ascaphus truei.</title>
        <authorList>
            <person name="Conlon J.M."/>
            <person name="Sonnevend A."/>
            <person name="Davidson C."/>
            <person name="Smith D.D."/>
            <person name="Nielsen P.F."/>
        </authorList>
    </citation>
    <scope>PROTEIN SEQUENCE</scope>
    <scope>MASS SPECTROMETRY</scope>
    <source>
        <tissue>Skin secretion</tissue>
    </source>
</reference>
<sequence length="24" mass="2586">GFKDWIKGAAKKLIKTVAANIANQ</sequence>
<accession>P0CJ28</accession>
<name>ASCA4_ASCTR</name>
<feature type="peptide" id="PRO_0000406131" description="Ascaphin-4">
    <location>
        <begin position="1"/>
        <end position="24"/>
    </location>
</feature>
<dbReference type="GO" id="GO:0005576">
    <property type="term" value="C:extracellular region"/>
    <property type="evidence" value="ECO:0000250"/>
    <property type="project" value="UniProtKB"/>
</dbReference>
<dbReference type="GO" id="GO:0050829">
    <property type="term" value="P:defense response to Gram-negative bacterium"/>
    <property type="evidence" value="ECO:0000250"/>
    <property type="project" value="UniProtKB"/>
</dbReference>
<protein>
    <recommendedName>
        <fullName>Ascaphin-4</fullName>
    </recommendedName>
</protein>
<evidence type="ECO:0000250" key="1"/>
<evidence type="ECO:0000269" key="2">
    <source>
    </source>
</evidence>
<evidence type="ECO:0000305" key="3"/>
<organism>
    <name type="scientific">Ascaphus truei</name>
    <name type="common">Coastal tailed frog</name>
    <dbReference type="NCBI Taxonomy" id="8439"/>
    <lineage>
        <taxon>Eukaryota</taxon>
        <taxon>Metazoa</taxon>
        <taxon>Chordata</taxon>
        <taxon>Craniata</taxon>
        <taxon>Vertebrata</taxon>
        <taxon>Euteleostomi</taxon>
        <taxon>Amphibia</taxon>
        <taxon>Batrachia</taxon>
        <taxon>Anura</taxon>
        <taxon>Ascaphidae</taxon>
        <taxon>Ascaphus</taxon>
    </lineage>
</organism>
<comment type="function">
    <text evidence="1">Antimicrobial peptide that shows higher potency against Gram-negative bacteria than against Gram-positive bacteria. Has a very week hemolytic activity (By similarity).</text>
</comment>
<comment type="subcellular location">
    <subcellularLocation>
        <location>Secreted</location>
    </subcellularLocation>
</comment>
<comment type="tissue specificity">
    <text>Expressed by the skin glands.</text>
</comment>
<comment type="mass spectrometry" mass="2584.6" method="MALDI" evidence="2"/>
<comment type="similarity">
    <text evidence="3">Belongs to the ascaphin family.</text>
</comment>